<name>ACP_BRASO</name>
<organism>
    <name type="scientific">Bradyrhizobium sp. (strain ORS 278)</name>
    <dbReference type="NCBI Taxonomy" id="114615"/>
    <lineage>
        <taxon>Bacteria</taxon>
        <taxon>Pseudomonadati</taxon>
        <taxon>Pseudomonadota</taxon>
        <taxon>Alphaproteobacteria</taxon>
        <taxon>Hyphomicrobiales</taxon>
        <taxon>Nitrobacteraceae</taxon>
        <taxon>Bradyrhizobium</taxon>
    </lineage>
</organism>
<dbReference type="EMBL" id="CU234118">
    <property type="protein sequence ID" value="CAL77107.1"/>
    <property type="molecule type" value="Genomic_DNA"/>
</dbReference>
<dbReference type="RefSeq" id="WP_006610957.1">
    <property type="nucleotide sequence ID" value="NC_009445.1"/>
</dbReference>
<dbReference type="SMR" id="A4YT81"/>
<dbReference type="STRING" id="114615.BRADO3313"/>
<dbReference type="KEGG" id="bra:BRADO3313"/>
<dbReference type="eggNOG" id="COG0236">
    <property type="taxonomic scope" value="Bacteria"/>
</dbReference>
<dbReference type="HOGENOM" id="CLU_108696_5_1_5"/>
<dbReference type="OrthoDB" id="9804551at2"/>
<dbReference type="UniPathway" id="UPA00094"/>
<dbReference type="Proteomes" id="UP000001994">
    <property type="component" value="Chromosome"/>
</dbReference>
<dbReference type="GO" id="GO:0005829">
    <property type="term" value="C:cytosol"/>
    <property type="evidence" value="ECO:0007669"/>
    <property type="project" value="TreeGrafter"/>
</dbReference>
<dbReference type="GO" id="GO:0016020">
    <property type="term" value="C:membrane"/>
    <property type="evidence" value="ECO:0007669"/>
    <property type="project" value="GOC"/>
</dbReference>
<dbReference type="GO" id="GO:0000035">
    <property type="term" value="F:acyl binding"/>
    <property type="evidence" value="ECO:0007669"/>
    <property type="project" value="TreeGrafter"/>
</dbReference>
<dbReference type="GO" id="GO:0000036">
    <property type="term" value="F:acyl carrier activity"/>
    <property type="evidence" value="ECO:0007669"/>
    <property type="project" value="UniProtKB-UniRule"/>
</dbReference>
<dbReference type="GO" id="GO:0009245">
    <property type="term" value="P:lipid A biosynthetic process"/>
    <property type="evidence" value="ECO:0007669"/>
    <property type="project" value="TreeGrafter"/>
</dbReference>
<dbReference type="FunFam" id="1.10.1200.10:FF:000012">
    <property type="entry name" value="Acyl carrier protein"/>
    <property type="match status" value="1"/>
</dbReference>
<dbReference type="Gene3D" id="1.10.1200.10">
    <property type="entry name" value="ACP-like"/>
    <property type="match status" value="1"/>
</dbReference>
<dbReference type="HAMAP" id="MF_01217">
    <property type="entry name" value="Acyl_carrier"/>
    <property type="match status" value="1"/>
</dbReference>
<dbReference type="InterPro" id="IPR003231">
    <property type="entry name" value="ACP"/>
</dbReference>
<dbReference type="InterPro" id="IPR036736">
    <property type="entry name" value="ACP-like_sf"/>
</dbReference>
<dbReference type="InterPro" id="IPR009081">
    <property type="entry name" value="PP-bd_ACP"/>
</dbReference>
<dbReference type="InterPro" id="IPR006162">
    <property type="entry name" value="Ppantetheine_attach_site"/>
</dbReference>
<dbReference type="NCBIfam" id="TIGR00517">
    <property type="entry name" value="acyl_carrier"/>
    <property type="match status" value="1"/>
</dbReference>
<dbReference type="NCBIfam" id="NF002148">
    <property type="entry name" value="PRK00982.1-2"/>
    <property type="match status" value="1"/>
</dbReference>
<dbReference type="NCBIfam" id="NF002149">
    <property type="entry name" value="PRK00982.1-3"/>
    <property type="match status" value="1"/>
</dbReference>
<dbReference type="NCBIfam" id="NF002150">
    <property type="entry name" value="PRK00982.1-4"/>
    <property type="match status" value="1"/>
</dbReference>
<dbReference type="NCBIfam" id="NF002151">
    <property type="entry name" value="PRK00982.1-5"/>
    <property type="match status" value="1"/>
</dbReference>
<dbReference type="PANTHER" id="PTHR20863">
    <property type="entry name" value="ACYL CARRIER PROTEIN"/>
    <property type="match status" value="1"/>
</dbReference>
<dbReference type="PANTHER" id="PTHR20863:SF76">
    <property type="entry name" value="CARRIER DOMAIN-CONTAINING PROTEIN"/>
    <property type="match status" value="1"/>
</dbReference>
<dbReference type="Pfam" id="PF00550">
    <property type="entry name" value="PP-binding"/>
    <property type="match status" value="1"/>
</dbReference>
<dbReference type="SUPFAM" id="SSF47336">
    <property type="entry name" value="ACP-like"/>
    <property type="match status" value="1"/>
</dbReference>
<dbReference type="PROSITE" id="PS50075">
    <property type="entry name" value="CARRIER"/>
    <property type="match status" value="1"/>
</dbReference>
<dbReference type="PROSITE" id="PS00012">
    <property type="entry name" value="PHOSPHOPANTETHEINE"/>
    <property type="match status" value="1"/>
</dbReference>
<reference key="1">
    <citation type="journal article" date="2007" name="Science">
        <title>Legumes symbioses: absence of nod genes in photosynthetic bradyrhizobia.</title>
        <authorList>
            <person name="Giraud E."/>
            <person name="Moulin L."/>
            <person name="Vallenet D."/>
            <person name="Barbe V."/>
            <person name="Cytryn E."/>
            <person name="Avarre J.-C."/>
            <person name="Jaubert M."/>
            <person name="Simon D."/>
            <person name="Cartieaux F."/>
            <person name="Prin Y."/>
            <person name="Bena G."/>
            <person name="Hannibal L."/>
            <person name="Fardoux J."/>
            <person name="Kojadinovic M."/>
            <person name="Vuillet L."/>
            <person name="Lajus A."/>
            <person name="Cruveiller S."/>
            <person name="Rouy Z."/>
            <person name="Mangenot S."/>
            <person name="Segurens B."/>
            <person name="Dossat C."/>
            <person name="Franck W.L."/>
            <person name="Chang W.-S."/>
            <person name="Saunders E."/>
            <person name="Bruce D."/>
            <person name="Richardson P."/>
            <person name="Normand P."/>
            <person name="Dreyfus B."/>
            <person name="Pignol D."/>
            <person name="Stacey G."/>
            <person name="Emerich D."/>
            <person name="Vermeglio A."/>
            <person name="Medigue C."/>
            <person name="Sadowsky M."/>
        </authorList>
    </citation>
    <scope>NUCLEOTIDE SEQUENCE [LARGE SCALE GENOMIC DNA]</scope>
    <source>
        <strain>ORS 278</strain>
    </source>
</reference>
<accession>A4YT81</accession>
<sequence>MSEIGERVKKIVVEHLGVEPEKVVDNASFIDDLGADSLDTVELVMAFEEEFGCEIPDDAAETILTVGDATKFLEKNAKS</sequence>
<comment type="function">
    <text evidence="1">Carrier of the growing fatty acid chain in fatty acid biosynthesis.</text>
</comment>
<comment type="pathway">
    <text evidence="1">Lipid metabolism; fatty acid biosynthesis.</text>
</comment>
<comment type="subcellular location">
    <subcellularLocation>
        <location evidence="1">Cytoplasm</location>
    </subcellularLocation>
</comment>
<comment type="PTM">
    <text evidence="1">4'-phosphopantetheine is transferred from CoA to a specific serine of apo-ACP by AcpS. This modification is essential for activity because fatty acids are bound in thioester linkage to the sulfhydryl of the prosthetic group.</text>
</comment>
<comment type="similarity">
    <text evidence="1">Belongs to the acyl carrier protein (ACP) family.</text>
</comment>
<protein>
    <recommendedName>
        <fullName evidence="1">Acyl carrier protein</fullName>
        <shortName evidence="1">ACP</shortName>
    </recommendedName>
</protein>
<keyword id="KW-0963">Cytoplasm</keyword>
<keyword id="KW-0275">Fatty acid biosynthesis</keyword>
<keyword id="KW-0276">Fatty acid metabolism</keyword>
<keyword id="KW-0444">Lipid biosynthesis</keyword>
<keyword id="KW-0443">Lipid metabolism</keyword>
<keyword id="KW-0596">Phosphopantetheine</keyword>
<keyword id="KW-0597">Phosphoprotein</keyword>
<keyword id="KW-1185">Reference proteome</keyword>
<feature type="chain" id="PRO_1000066565" description="Acyl carrier protein">
    <location>
        <begin position="1"/>
        <end position="79"/>
    </location>
</feature>
<feature type="domain" description="Carrier" evidence="2">
    <location>
        <begin position="2"/>
        <end position="77"/>
    </location>
</feature>
<feature type="modified residue" description="O-(pantetheine 4'-phosphoryl)serine" evidence="2">
    <location>
        <position position="37"/>
    </location>
</feature>
<gene>
    <name evidence="1" type="primary">acpP</name>
    <name type="ordered locus">BRADO3313</name>
</gene>
<evidence type="ECO:0000255" key="1">
    <source>
        <dbReference type="HAMAP-Rule" id="MF_01217"/>
    </source>
</evidence>
<evidence type="ECO:0000255" key="2">
    <source>
        <dbReference type="PROSITE-ProRule" id="PRU00258"/>
    </source>
</evidence>
<proteinExistence type="inferred from homology"/>